<accession>Q46ZR3</accession>
<reference key="1">
    <citation type="journal article" date="2010" name="PLoS ONE">
        <title>The complete multipartite genome sequence of Cupriavidus necator JMP134, a versatile pollutant degrader.</title>
        <authorList>
            <person name="Lykidis A."/>
            <person name="Perez-Pantoja D."/>
            <person name="Ledger T."/>
            <person name="Mavromatis K."/>
            <person name="Anderson I.J."/>
            <person name="Ivanova N.N."/>
            <person name="Hooper S.D."/>
            <person name="Lapidus A."/>
            <person name="Lucas S."/>
            <person name="Gonzalez B."/>
            <person name="Kyrpides N.C."/>
        </authorList>
    </citation>
    <scope>NUCLEOTIDE SEQUENCE [LARGE SCALE GENOMIC DNA]</scope>
    <source>
        <strain>JMP134 / LMG 1197</strain>
    </source>
</reference>
<protein>
    <recommendedName>
        <fullName evidence="1">Small ribosomal subunit protein bS6</fullName>
    </recommendedName>
    <alternativeName>
        <fullName evidence="3">30S ribosomal protein S6</fullName>
    </alternativeName>
</protein>
<sequence length="124" mass="14224">MRHYEIVFIVHPDQSEQVPAMIERYKSLVTSQGGQVHRVEDWGRRQMAYMIQKLAKAHYVCVNIECGKETLAELEHAFKFNDAVLRHLIVQTKKAETAPSPMMKEVQREEARKAAQTTTEGQAA</sequence>
<gene>
    <name evidence="1" type="primary">rpsF</name>
    <name type="ordered locus">Reut_A2006</name>
</gene>
<comment type="function">
    <text evidence="1">Binds together with bS18 to 16S ribosomal RNA.</text>
</comment>
<comment type="similarity">
    <text evidence="1">Belongs to the bacterial ribosomal protein bS6 family.</text>
</comment>
<keyword id="KW-0687">Ribonucleoprotein</keyword>
<keyword id="KW-0689">Ribosomal protein</keyword>
<keyword id="KW-0694">RNA-binding</keyword>
<keyword id="KW-0699">rRNA-binding</keyword>
<proteinExistence type="inferred from homology"/>
<feature type="chain" id="PRO_0000229570" description="Small ribosomal subunit protein bS6">
    <location>
        <begin position="1"/>
        <end position="124"/>
    </location>
</feature>
<feature type="region of interest" description="Disordered" evidence="2">
    <location>
        <begin position="96"/>
        <end position="124"/>
    </location>
</feature>
<feature type="compositionally biased region" description="Polar residues" evidence="2">
    <location>
        <begin position="115"/>
        <end position="124"/>
    </location>
</feature>
<name>RS6_CUPPJ</name>
<organism>
    <name type="scientific">Cupriavidus pinatubonensis (strain JMP 134 / LMG 1197)</name>
    <name type="common">Cupriavidus necator (strain JMP 134)</name>
    <dbReference type="NCBI Taxonomy" id="264198"/>
    <lineage>
        <taxon>Bacteria</taxon>
        <taxon>Pseudomonadati</taxon>
        <taxon>Pseudomonadota</taxon>
        <taxon>Betaproteobacteria</taxon>
        <taxon>Burkholderiales</taxon>
        <taxon>Burkholderiaceae</taxon>
        <taxon>Cupriavidus</taxon>
    </lineage>
</organism>
<dbReference type="EMBL" id="CP000090">
    <property type="protein sequence ID" value="AAZ61370.1"/>
    <property type="molecule type" value="Genomic_DNA"/>
</dbReference>
<dbReference type="SMR" id="Q46ZR3"/>
<dbReference type="STRING" id="264198.Reut_A2006"/>
<dbReference type="KEGG" id="reu:Reut_A2006"/>
<dbReference type="eggNOG" id="COG0360">
    <property type="taxonomic scope" value="Bacteria"/>
</dbReference>
<dbReference type="HOGENOM" id="CLU_113441_6_1_4"/>
<dbReference type="OrthoDB" id="9812702at2"/>
<dbReference type="GO" id="GO:0022627">
    <property type="term" value="C:cytosolic small ribosomal subunit"/>
    <property type="evidence" value="ECO:0007669"/>
    <property type="project" value="TreeGrafter"/>
</dbReference>
<dbReference type="GO" id="GO:0070181">
    <property type="term" value="F:small ribosomal subunit rRNA binding"/>
    <property type="evidence" value="ECO:0007669"/>
    <property type="project" value="TreeGrafter"/>
</dbReference>
<dbReference type="GO" id="GO:0003735">
    <property type="term" value="F:structural constituent of ribosome"/>
    <property type="evidence" value="ECO:0007669"/>
    <property type="project" value="InterPro"/>
</dbReference>
<dbReference type="GO" id="GO:0006412">
    <property type="term" value="P:translation"/>
    <property type="evidence" value="ECO:0007669"/>
    <property type="project" value="UniProtKB-UniRule"/>
</dbReference>
<dbReference type="CDD" id="cd00473">
    <property type="entry name" value="bS6"/>
    <property type="match status" value="1"/>
</dbReference>
<dbReference type="Gene3D" id="3.30.70.60">
    <property type="match status" value="1"/>
</dbReference>
<dbReference type="HAMAP" id="MF_00360">
    <property type="entry name" value="Ribosomal_bS6"/>
    <property type="match status" value="1"/>
</dbReference>
<dbReference type="InterPro" id="IPR000529">
    <property type="entry name" value="Ribosomal_bS6"/>
</dbReference>
<dbReference type="InterPro" id="IPR035980">
    <property type="entry name" value="Ribosomal_bS6_sf"/>
</dbReference>
<dbReference type="InterPro" id="IPR020814">
    <property type="entry name" value="Ribosomal_S6_plastid/chlpt"/>
</dbReference>
<dbReference type="InterPro" id="IPR014717">
    <property type="entry name" value="Transl_elong_EF1B/ribsomal_bS6"/>
</dbReference>
<dbReference type="NCBIfam" id="TIGR00166">
    <property type="entry name" value="S6"/>
    <property type="match status" value="1"/>
</dbReference>
<dbReference type="PANTHER" id="PTHR21011">
    <property type="entry name" value="MITOCHONDRIAL 28S RIBOSOMAL PROTEIN S6"/>
    <property type="match status" value="1"/>
</dbReference>
<dbReference type="PANTHER" id="PTHR21011:SF1">
    <property type="entry name" value="SMALL RIBOSOMAL SUBUNIT PROTEIN BS6M"/>
    <property type="match status" value="1"/>
</dbReference>
<dbReference type="Pfam" id="PF01250">
    <property type="entry name" value="Ribosomal_S6"/>
    <property type="match status" value="1"/>
</dbReference>
<dbReference type="SUPFAM" id="SSF54995">
    <property type="entry name" value="Ribosomal protein S6"/>
    <property type="match status" value="1"/>
</dbReference>
<evidence type="ECO:0000255" key="1">
    <source>
        <dbReference type="HAMAP-Rule" id="MF_00360"/>
    </source>
</evidence>
<evidence type="ECO:0000256" key="2">
    <source>
        <dbReference type="SAM" id="MobiDB-lite"/>
    </source>
</evidence>
<evidence type="ECO:0000305" key="3"/>